<evidence type="ECO:0000255" key="1">
    <source>
        <dbReference type="HAMAP-Rule" id="MF_00321"/>
    </source>
</evidence>
<sequence>MPMHPMEKRLHQALFLQSAQRLDQCPPDEGREVAFAGRSNAGKSSAINRLTGQRSLARTSKTPGRTQLLNFFQLDEERRLVDLPGYGYAKVSKSKRNEWQEHLDHYLSERQALVGLVLMMDIRHPLKDFDLMMLEWSAQANMPIHILMTKADKLKFGAAKSTLLQVQKQLKEHPAPLSLQLFSATNGTGCDEAWDKLGEWLGIERLTP</sequence>
<feature type="chain" id="PRO_0000266805" description="Probable GTP-binding protein EngB">
    <location>
        <begin position="1"/>
        <end position="208"/>
    </location>
</feature>
<feature type="domain" description="EngB-type G" evidence="1">
    <location>
        <begin position="29"/>
        <end position="203"/>
    </location>
</feature>
<feature type="binding site" evidence="1">
    <location>
        <begin position="37"/>
        <end position="44"/>
    </location>
    <ligand>
        <name>GTP</name>
        <dbReference type="ChEBI" id="CHEBI:37565"/>
    </ligand>
</feature>
<feature type="binding site" evidence="1">
    <location>
        <position position="44"/>
    </location>
    <ligand>
        <name>Mg(2+)</name>
        <dbReference type="ChEBI" id="CHEBI:18420"/>
    </ligand>
</feature>
<feature type="binding site" evidence="1">
    <location>
        <begin position="64"/>
        <end position="68"/>
    </location>
    <ligand>
        <name>GTP</name>
        <dbReference type="ChEBI" id="CHEBI:37565"/>
    </ligand>
</feature>
<feature type="binding site" evidence="1">
    <location>
        <position position="66"/>
    </location>
    <ligand>
        <name>Mg(2+)</name>
        <dbReference type="ChEBI" id="CHEBI:18420"/>
    </ligand>
</feature>
<feature type="binding site" evidence="1">
    <location>
        <begin position="82"/>
        <end position="85"/>
    </location>
    <ligand>
        <name>GTP</name>
        <dbReference type="ChEBI" id="CHEBI:37565"/>
    </ligand>
</feature>
<feature type="binding site" evidence="1">
    <location>
        <begin position="149"/>
        <end position="152"/>
    </location>
    <ligand>
        <name>GTP</name>
        <dbReference type="ChEBI" id="CHEBI:37565"/>
    </ligand>
</feature>
<feature type="binding site" evidence="1">
    <location>
        <begin position="182"/>
        <end position="184"/>
    </location>
    <ligand>
        <name>GTP</name>
        <dbReference type="ChEBI" id="CHEBI:37565"/>
    </ligand>
</feature>
<accession>Q0VL48</accession>
<keyword id="KW-0131">Cell cycle</keyword>
<keyword id="KW-0132">Cell division</keyword>
<keyword id="KW-0342">GTP-binding</keyword>
<keyword id="KW-0460">Magnesium</keyword>
<keyword id="KW-0479">Metal-binding</keyword>
<keyword id="KW-0547">Nucleotide-binding</keyword>
<keyword id="KW-1185">Reference proteome</keyword>
<keyword id="KW-0717">Septation</keyword>
<name>ENGB_ALCBS</name>
<proteinExistence type="inferred from homology"/>
<comment type="function">
    <text evidence="1">Necessary for normal cell division and for the maintenance of normal septation.</text>
</comment>
<comment type="cofactor">
    <cofactor evidence="1">
        <name>Mg(2+)</name>
        <dbReference type="ChEBI" id="CHEBI:18420"/>
    </cofactor>
</comment>
<comment type="similarity">
    <text evidence="1">Belongs to the TRAFAC class TrmE-Era-EngA-EngB-Septin-like GTPase superfamily. EngB GTPase family.</text>
</comment>
<gene>
    <name evidence="1" type="primary">engB</name>
    <name type="ordered locus">ABO_2652</name>
</gene>
<organism>
    <name type="scientific">Alcanivorax borkumensis (strain ATCC 700651 / DSM 11573 / NCIMB 13689 / SK2)</name>
    <dbReference type="NCBI Taxonomy" id="393595"/>
    <lineage>
        <taxon>Bacteria</taxon>
        <taxon>Pseudomonadati</taxon>
        <taxon>Pseudomonadota</taxon>
        <taxon>Gammaproteobacteria</taxon>
        <taxon>Oceanospirillales</taxon>
        <taxon>Alcanivoracaceae</taxon>
        <taxon>Alcanivorax</taxon>
    </lineage>
</organism>
<reference key="1">
    <citation type="journal article" date="2006" name="Nat. Biotechnol.">
        <title>Genome sequence of the ubiquitous hydrocarbon-degrading marine bacterium Alcanivorax borkumensis.</title>
        <authorList>
            <person name="Schneiker S."/>
            <person name="Martins dos Santos V.A.P."/>
            <person name="Bartels D."/>
            <person name="Bekel T."/>
            <person name="Brecht M."/>
            <person name="Buhrmester J."/>
            <person name="Chernikova T.N."/>
            <person name="Denaro R."/>
            <person name="Ferrer M."/>
            <person name="Gertler C."/>
            <person name="Goesmann A."/>
            <person name="Golyshina O.V."/>
            <person name="Kaminski F."/>
            <person name="Khachane A.N."/>
            <person name="Lang S."/>
            <person name="Linke B."/>
            <person name="McHardy A.C."/>
            <person name="Meyer F."/>
            <person name="Nechitaylo T."/>
            <person name="Puehler A."/>
            <person name="Regenhardt D."/>
            <person name="Rupp O."/>
            <person name="Sabirova J.S."/>
            <person name="Selbitschka W."/>
            <person name="Yakimov M.M."/>
            <person name="Timmis K.N."/>
            <person name="Vorhoelter F.-J."/>
            <person name="Weidner S."/>
            <person name="Kaiser O."/>
            <person name="Golyshin P.N."/>
        </authorList>
    </citation>
    <scope>NUCLEOTIDE SEQUENCE [LARGE SCALE GENOMIC DNA]</scope>
    <source>
        <strain>ATCC 700651 / DSM 11573 / NCIMB 13689 / SK2</strain>
    </source>
</reference>
<protein>
    <recommendedName>
        <fullName evidence="1">Probable GTP-binding protein EngB</fullName>
    </recommendedName>
</protein>
<dbReference type="EMBL" id="AM286690">
    <property type="protein sequence ID" value="CAL18100.1"/>
    <property type="molecule type" value="Genomic_DNA"/>
</dbReference>
<dbReference type="SMR" id="Q0VL48"/>
<dbReference type="STRING" id="393595.ABO_2652"/>
<dbReference type="KEGG" id="abo:ABO_2652"/>
<dbReference type="eggNOG" id="COG0218">
    <property type="taxonomic scope" value="Bacteria"/>
</dbReference>
<dbReference type="HOGENOM" id="CLU_033732_1_0_6"/>
<dbReference type="OrthoDB" id="9804921at2"/>
<dbReference type="Proteomes" id="UP000008871">
    <property type="component" value="Chromosome"/>
</dbReference>
<dbReference type="GO" id="GO:0005829">
    <property type="term" value="C:cytosol"/>
    <property type="evidence" value="ECO:0007669"/>
    <property type="project" value="TreeGrafter"/>
</dbReference>
<dbReference type="GO" id="GO:0005525">
    <property type="term" value="F:GTP binding"/>
    <property type="evidence" value="ECO:0007669"/>
    <property type="project" value="UniProtKB-UniRule"/>
</dbReference>
<dbReference type="GO" id="GO:0046872">
    <property type="term" value="F:metal ion binding"/>
    <property type="evidence" value="ECO:0007669"/>
    <property type="project" value="UniProtKB-KW"/>
</dbReference>
<dbReference type="GO" id="GO:0000917">
    <property type="term" value="P:division septum assembly"/>
    <property type="evidence" value="ECO:0007669"/>
    <property type="project" value="UniProtKB-KW"/>
</dbReference>
<dbReference type="CDD" id="cd01876">
    <property type="entry name" value="YihA_EngB"/>
    <property type="match status" value="1"/>
</dbReference>
<dbReference type="FunFam" id="3.40.50.300:FF:000098">
    <property type="entry name" value="Probable GTP-binding protein EngB"/>
    <property type="match status" value="1"/>
</dbReference>
<dbReference type="Gene3D" id="3.40.50.300">
    <property type="entry name" value="P-loop containing nucleotide triphosphate hydrolases"/>
    <property type="match status" value="1"/>
</dbReference>
<dbReference type="HAMAP" id="MF_00321">
    <property type="entry name" value="GTPase_EngB"/>
    <property type="match status" value="1"/>
</dbReference>
<dbReference type="InterPro" id="IPR030393">
    <property type="entry name" value="G_ENGB_dom"/>
</dbReference>
<dbReference type="InterPro" id="IPR006073">
    <property type="entry name" value="GTP-bd"/>
</dbReference>
<dbReference type="InterPro" id="IPR019987">
    <property type="entry name" value="GTP-bd_ribosome_bio_YsxC"/>
</dbReference>
<dbReference type="InterPro" id="IPR027417">
    <property type="entry name" value="P-loop_NTPase"/>
</dbReference>
<dbReference type="NCBIfam" id="TIGR03598">
    <property type="entry name" value="GTPase_YsxC"/>
    <property type="match status" value="1"/>
</dbReference>
<dbReference type="PANTHER" id="PTHR11649:SF13">
    <property type="entry name" value="ENGB-TYPE G DOMAIN-CONTAINING PROTEIN"/>
    <property type="match status" value="1"/>
</dbReference>
<dbReference type="PANTHER" id="PTHR11649">
    <property type="entry name" value="MSS1/TRME-RELATED GTP-BINDING PROTEIN"/>
    <property type="match status" value="1"/>
</dbReference>
<dbReference type="Pfam" id="PF01926">
    <property type="entry name" value="MMR_HSR1"/>
    <property type="match status" value="1"/>
</dbReference>
<dbReference type="SUPFAM" id="SSF52540">
    <property type="entry name" value="P-loop containing nucleoside triphosphate hydrolases"/>
    <property type="match status" value="1"/>
</dbReference>
<dbReference type="PROSITE" id="PS51706">
    <property type="entry name" value="G_ENGB"/>
    <property type="match status" value="1"/>
</dbReference>